<proteinExistence type="inferred from homology"/>
<reference key="1">
    <citation type="journal article" date="2006" name="PLoS Genet.">
        <title>Secrets of soil survival revealed by the genome sequence of Arthrobacter aurescens TC1.</title>
        <authorList>
            <person name="Mongodin E.F."/>
            <person name="Shapir N."/>
            <person name="Daugherty S.C."/>
            <person name="DeBoy R.T."/>
            <person name="Emerson J.B."/>
            <person name="Shvartzbeyn A."/>
            <person name="Radune D."/>
            <person name="Vamathevan J."/>
            <person name="Riggs F."/>
            <person name="Grinberg V."/>
            <person name="Khouri H.M."/>
            <person name="Wackett L.P."/>
            <person name="Nelson K.E."/>
            <person name="Sadowsky M.J."/>
        </authorList>
    </citation>
    <scope>NUCLEOTIDE SEQUENCE [LARGE SCALE GENOMIC DNA]</scope>
    <source>
        <strain>TC1</strain>
    </source>
</reference>
<feature type="chain" id="PRO_1000020214" description="1-deoxy-D-xylulose 5-phosphate reductoisomerase">
    <location>
        <begin position="1"/>
        <end position="394"/>
    </location>
</feature>
<feature type="binding site" evidence="1">
    <location>
        <position position="12"/>
    </location>
    <ligand>
        <name>NADPH</name>
        <dbReference type="ChEBI" id="CHEBI:57783"/>
    </ligand>
</feature>
<feature type="binding site" evidence="1">
    <location>
        <position position="13"/>
    </location>
    <ligand>
        <name>NADPH</name>
        <dbReference type="ChEBI" id="CHEBI:57783"/>
    </ligand>
</feature>
<feature type="binding site" evidence="1">
    <location>
        <position position="14"/>
    </location>
    <ligand>
        <name>NADPH</name>
        <dbReference type="ChEBI" id="CHEBI:57783"/>
    </ligand>
</feature>
<feature type="binding site" evidence="1">
    <location>
        <position position="15"/>
    </location>
    <ligand>
        <name>NADPH</name>
        <dbReference type="ChEBI" id="CHEBI:57783"/>
    </ligand>
</feature>
<feature type="binding site" evidence="1">
    <location>
        <position position="38"/>
    </location>
    <ligand>
        <name>NADPH</name>
        <dbReference type="ChEBI" id="CHEBI:57783"/>
    </ligand>
</feature>
<feature type="binding site" evidence="1">
    <location>
        <position position="41"/>
    </location>
    <ligand>
        <name>NADPH</name>
        <dbReference type="ChEBI" id="CHEBI:57783"/>
    </ligand>
</feature>
<feature type="binding site" evidence="1">
    <location>
        <position position="132"/>
    </location>
    <ligand>
        <name>NADPH</name>
        <dbReference type="ChEBI" id="CHEBI:57783"/>
    </ligand>
</feature>
<feature type="binding site" evidence="1">
    <location>
        <position position="133"/>
    </location>
    <ligand>
        <name>1-deoxy-D-xylulose 5-phosphate</name>
        <dbReference type="ChEBI" id="CHEBI:57792"/>
    </ligand>
</feature>
<feature type="binding site" evidence="1">
    <location>
        <position position="134"/>
    </location>
    <ligand>
        <name>NADPH</name>
        <dbReference type="ChEBI" id="CHEBI:57783"/>
    </ligand>
</feature>
<feature type="binding site" evidence="1">
    <location>
        <position position="156"/>
    </location>
    <ligand>
        <name>Mn(2+)</name>
        <dbReference type="ChEBI" id="CHEBI:29035"/>
    </ligand>
</feature>
<feature type="binding site" evidence="1">
    <location>
        <position position="157"/>
    </location>
    <ligand>
        <name>1-deoxy-D-xylulose 5-phosphate</name>
        <dbReference type="ChEBI" id="CHEBI:57792"/>
    </ligand>
</feature>
<feature type="binding site" evidence="1">
    <location>
        <position position="158"/>
    </location>
    <ligand>
        <name>1-deoxy-D-xylulose 5-phosphate</name>
        <dbReference type="ChEBI" id="CHEBI:57792"/>
    </ligand>
</feature>
<feature type="binding site" evidence="1">
    <location>
        <position position="158"/>
    </location>
    <ligand>
        <name>Mn(2+)</name>
        <dbReference type="ChEBI" id="CHEBI:29035"/>
    </ligand>
</feature>
<feature type="binding site" evidence="1">
    <location>
        <position position="182"/>
    </location>
    <ligand>
        <name>1-deoxy-D-xylulose 5-phosphate</name>
        <dbReference type="ChEBI" id="CHEBI:57792"/>
    </ligand>
</feature>
<feature type="binding site" evidence="1">
    <location>
        <position position="205"/>
    </location>
    <ligand>
        <name>1-deoxy-D-xylulose 5-phosphate</name>
        <dbReference type="ChEBI" id="CHEBI:57792"/>
    </ligand>
</feature>
<feature type="binding site" evidence="1">
    <location>
        <position position="211"/>
    </location>
    <ligand>
        <name>NADPH</name>
        <dbReference type="ChEBI" id="CHEBI:57783"/>
    </ligand>
</feature>
<feature type="binding site" evidence="1">
    <location>
        <position position="218"/>
    </location>
    <ligand>
        <name>1-deoxy-D-xylulose 5-phosphate</name>
        <dbReference type="ChEBI" id="CHEBI:57792"/>
    </ligand>
</feature>
<feature type="binding site" evidence="1">
    <location>
        <position position="223"/>
    </location>
    <ligand>
        <name>1-deoxy-D-xylulose 5-phosphate</name>
        <dbReference type="ChEBI" id="CHEBI:57792"/>
    </ligand>
</feature>
<feature type="binding site" evidence="1">
    <location>
        <position position="224"/>
    </location>
    <ligand>
        <name>1-deoxy-D-xylulose 5-phosphate</name>
        <dbReference type="ChEBI" id="CHEBI:57792"/>
    </ligand>
</feature>
<feature type="binding site" evidence="1">
    <location>
        <position position="227"/>
    </location>
    <ligand>
        <name>1-deoxy-D-xylulose 5-phosphate</name>
        <dbReference type="ChEBI" id="CHEBI:57792"/>
    </ligand>
</feature>
<feature type="binding site" evidence="1">
    <location>
        <position position="227"/>
    </location>
    <ligand>
        <name>Mn(2+)</name>
        <dbReference type="ChEBI" id="CHEBI:29035"/>
    </ligand>
</feature>
<dbReference type="EC" id="1.1.1.267" evidence="1"/>
<dbReference type="EMBL" id="CP000474">
    <property type="protein sequence ID" value="ABM08710.1"/>
    <property type="molecule type" value="Genomic_DNA"/>
</dbReference>
<dbReference type="RefSeq" id="WP_011774255.1">
    <property type="nucleotide sequence ID" value="NC_008711.1"/>
</dbReference>
<dbReference type="SMR" id="A1R4Z8"/>
<dbReference type="STRING" id="290340.AAur_1543"/>
<dbReference type="KEGG" id="aau:AAur_1543"/>
<dbReference type="eggNOG" id="COG0743">
    <property type="taxonomic scope" value="Bacteria"/>
</dbReference>
<dbReference type="HOGENOM" id="CLU_035714_4_0_11"/>
<dbReference type="OrthoDB" id="9806546at2"/>
<dbReference type="UniPathway" id="UPA00056">
    <property type="reaction ID" value="UER00092"/>
</dbReference>
<dbReference type="Proteomes" id="UP000000637">
    <property type="component" value="Chromosome"/>
</dbReference>
<dbReference type="GO" id="GO:0030604">
    <property type="term" value="F:1-deoxy-D-xylulose-5-phosphate reductoisomerase activity"/>
    <property type="evidence" value="ECO:0007669"/>
    <property type="project" value="UniProtKB-UniRule"/>
</dbReference>
<dbReference type="GO" id="GO:0030145">
    <property type="term" value="F:manganese ion binding"/>
    <property type="evidence" value="ECO:0007669"/>
    <property type="project" value="TreeGrafter"/>
</dbReference>
<dbReference type="GO" id="GO:0070402">
    <property type="term" value="F:NADPH binding"/>
    <property type="evidence" value="ECO:0007669"/>
    <property type="project" value="InterPro"/>
</dbReference>
<dbReference type="GO" id="GO:0051484">
    <property type="term" value="P:isopentenyl diphosphate biosynthetic process, methylerythritol 4-phosphate pathway involved in terpenoid biosynthetic process"/>
    <property type="evidence" value="ECO:0007669"/>
    <property type="project" value="TreeGrafter"/>
</dbReference>
<dbReference type="FunFam" id="3.40.50.720:FF:000045">
    <property type="entry name" value="1-deoxy-D-xylulose 5-phosphate reductoisomerase"/>
    <property type="match status" value="1"/>
</dbReference>
<dbReference type="Gene3D" id="1.10.1740.10">
    <property type="match status" value="1"/>
</dbReference>
<dbReference type="Gene3D" id="3.40.50.720">
    <property type="entry name" value="NAD(P)-binding Rossmann-like Domain"/>
    <property type="match status" value="1"/>
</dbReference>
<dbReference type="HAMAP" id="MF_00183">
    <property type="entry name" value="DXP_reductoisom"/>
    <property type="match status" value="1"/>
</dbReference>
<dbReference type="InterPro" id="IPR003821">
    <property type="entry name" value="DXP_reductoisomerase"/>
</dbReference>
<dbReference type="InterPro" id="IPR013644">
    <property type="entry name" value="DXP_reductoisomerase_C"/>
</dbReference>
<dbReference type="InterPro" id="IPR013512">
    <property type="entry name" value="DXP_reductoisomerase_N"/>
</dbReference>
<dbReference type="InterPro" id="IPR026877">
    <property type="entry name" value="DXPR_C"/>
</dbReference>
<dbReference type="InterPro" id="IPR036169">
    <property type="entry name" value="DXPR_C_sf"/>
</dbReference>
<dbReference type="InterPro" id="IPR036291">
    <property type="entry name" value="NAD(P)-bd_dom_sf"/>
</dbReference>
<dbReference type="NCBIfam" id="TIGR00243">
    <property type="entry name" value="Dxr"/>
    <property type="match status" value="1"/>
</dbReference>
<dbReference type="PANTHER" id="PTHR30525">
    <property type="entry name" value="1-DEOXY-D-XYLULOSE 5-PHOSPHATE REDUCTOISOMERASE"/>
    <property type="match status" value="1"/>
</dbReference>
<dbReference type="PANTHER" id="PTHR30525:SF0">
    <property type="entry name" value="1-DEOXY-D-XYLULOSE 5-PHOSPHATE REDUCTOISOMERASE, CHLOROPLASTIC"/>
    <property type="match status" value="1"/>
</dbReference>
<dbReference type="Pfam" id="PF08436">
    <property type="entry name" value="DXP_redisom_C"/>
    <property type="match status" value="1"/>
</dbReference>
<dbReference type="Pfam" id="PF02670">
    <property type="entry name" value="DXP_reductoisom"/>
    <property type="match status" value="1"/>
</dbReference>
<dbReference type="Pfam" id="PF13288">
    <property type="entry name" value="DXPR_C"/>
    <property type="match status" value="1"/>
</dbReference>
<dbReference type="PIRSF" id="PIRSF006205">
    <property type="entry name" value="Dxp_reductismrs"/>
    <property type="match status" value="1"/>
</dbReference>
<dbReference type="SUPFAM" id="SSF69055">
    <property type="entry name" value="1-deoxy-D-xylulose-5-phosphate reductoisomerase, C-terminal domain"/>
    <property type="match status" value="1"/>
</dbReference>
<dbReference type="SUPFAM" id="SSF55347">
    <property type="entry name" value="Glyceraldehyde-3-phosphate dehydrogenase-like, C-terminal domain"/>
    <property type="match status" value="1"/>
</dbReference>
<dbReference type="SUPFAM" id="SSF51735">
    <property type="entry name" value="NAD(P)-binding Rossmann-fold domains"/>
    <property type="match status" value="1"/>
</dbReference>
<organism>
    <name type="scientific">Paenarthrobacter aurescens (strain TC1)</name>
    <dbReference type="NCBI Taxonomy" id="290340"/>
    <lineage>
        <taxon>Bacteria</taxon>
        <taxon>Bacillati</taxon>
        <taxon>Actinomycetota</taxon>
        <taxon>Actinomycetes</taxon>
        <taxon>Micrococcales</taxon>
        <taxon>Micrococcaceae</taxon>
        <taxon>Paenarthrobacter</taxon>
    </lineage>
</organism>
<keyword id="KW-0414">Isoprene biosynthesis</keyword>
<keyword id="KW-0464">Manganese</keyword>
<keyword id="KW-0479">Metal-binding</keyword>
<keyword id="KW-0521">NADP</keyword>
<keyword id="KW-0560">Oxidoreductase</keyword>
<gene>
    <name evidence="1" type="primary">dxr</name>
    <name type="ordered locus">AAur_1543</name>
</gene>
<protein>
    <recommendedName>
        <fullName evidence="1">1-deoxy-D-xylulose 5-phosphate reductoisomerase</fullName>
        <shortName evidence="1">DXP reductoisomerase</shortName>
        <ecNumber evidence="1">1.1.1.267</ecNumber>
    </recommendedName>
    <alternativeName>
        <fullName evidence="1">1-deoxyxylulose-5-phosphate reductoisomerase</fullName>
    </alternativeName>
    <alternativeName>
        <fullName evidence="1">2-C-methyl-D-erythritol 4-phosphate synthase</fullName>
    </alternativeName>
</protein>
<accession>A1R4Z8</accession>
<evidence type="ECO:0000255" key="1">
    <source>
        <dbReference type="HAMAP-Rule" id="MF_00183"/>
    </source>
</evidence>
<sequence>MQPRKIVILGSTGSIGTQAIDVVDAAPHRFEVVALSAGGGNLALIAQQAVHTRAQAVGIAQGDQGALRQLIAAAAAAAGVRNFAPEIFVGPDASTRIAAIECDVVLNGITGSIGLAPTLAALGTGATLALANKESLIVGGALVKAAASPGQIVPVDSEHSAIAQCLRSGTDQEVEKLILTASGGPFRGRSREQLHDVTPQEALAHPTWDMGLMVTTNSASLVNKGLEVIEAHLLFDVPLDRIDVVVHPQSVVHSMVQFVDGSIIAQASPPDMRLPIALGLGWPDRVPRAAQACDWTQATSWTFEPLDTVAFPAVDLAKDAAKQGSTFPAVFNAANEEAVEAFHAGRIRFTQIVDTVESVLSEHSGSSELTVESVLDAEKWARARTLDRLATSAL</sequence>
<name>DXR_PAEAT</name>
<comment type="function">
    <text evidence="1">Catalyzes the NADPH-dependent rearrangement and reduction of 1-deoxy-D-xylulose-5-phosphate (DXP) to 2-C-methyl-D-erythritol 4-phosphate (MEP).</text>
</comment>
<comment type="catalytic activity">
    <reaction evidence="1">
        <text>2-C-methyl-D-erythritol 4-phosphate + NADP(+) = 1-deoxy-D-xylulose 5-phosphate + NADPH + H(+)</text>
        <dbReference type="Rhea" id="RHEA:13717"/>
        <dbReference type="ChEBI" id="CHEBI:15378"/>
        <dbReference type="ChEBI" id="CHEBI:57783"/>
        <dbReference type="ChEBI" id="CHEBI:57792"/>
        <dbReference type="ChEBI" id="CHEBI:58262"/>
        <dbReference type="ChEBI" id="CHEBI:58349"/>
        <dbReference type="EC" id="1.1.1.267"/>
    </reaction>
    <physiologicalReaction direction="right-to-left" evidence="1">
        <dbReference type="Rhea" id="RHEA:13719"/>
    </physiologicalReaction>
</comment>
<comment type="cofactor">
    <cofactor evidence="1">
        <name>Mg(2+)</name>
        <dbReference type="ChEBI" id="CHEBI:18420"/>
    </cofactor>
    <cofactor evidence="1">
        <name>Mn(2+)</name>
        <dbReference type="ChEBI" id="CHEBI:29035"/>
    </cofactor>
</comment>
<comment type="pathway">
    <text evidence="1">Isoprenoid biosynthesis; isopentenyl diphosphate biosynthesis via DXP pathway; isopentenyl diphosphate from 1-deoxy-D-xylulose 5-phosphate: step 1/6.</text>
</comment>
<comment type="similarity">
    <text evidence="1">Belongs to the DXR family.</text>
</comment>